<proteinExistence type="evidence at protein level"/>
<gene>
    <name type="primary">HARS2</name>
    <name type="synonym">HARSL</name>
    <name type="synonym">HARSR</name>
    <name type="synonym">HO3</name>
</gene>
<feature type="transit peptide" description="Mitochondrion" evidence="2">
    <location>
        <begin position="1"/>
        <end position="33"/>
    </location>
</feature>
<feature type="chain" id="PRO_0000136336" description="Histidine--tRNA ligase, mitochondrial">
    <location>
        <begin position="34"/>
        <end position="506"/>
    </location>
</feature>
<feature type="binding site" evidence="1">
    <location>
        <begin position="131"/>
        <end position="133"/>
    </location>
    <ligand>
        <name>L-histidine</name>
        <dbReference type="ChEBI" id="CHEBI:57595"/>
    </ligand>
</feature>
<feature type="binding site" evidence="1">
    <location>
        <position position="158"/>
    </location>
    <ligand>
        <name>L-histidine</name>
        <dbReference type="ChEBI" id="CHEBI:57595"/>
    </ligand>
</feature>
<feature type="binding site" evidence="1">
    <location>
        <position position="174"/>
    </location>
    <ligand>
        <name>L-histidine</name>
        <dbReference type="ChEBI" id="CHEBI:57595"/>
    </ligand>
</feature>
<feature type="binding site" evidence="1">
    <location>
        <position position="178"/>
    </location>
    <ligand>
        <name>L-histidine</name>
        <dbReference type="ChEBI" id="CHEBI:57595"/>
    </ligand>
</feature>
<feature type="binding site" evidence="1">
    <location>
        <position position="327"/>
    </location>
    <ligand>
        <name>L-histidine</name>
        <dbReference type="ChEBI" id="CHEBI:57595"/>
    </ligand>
</feature>
<feature type="binding site" evidence="1">
    <location>
        <begin position="331"/>
        <end position="332"/>
    </location>
    <ligand>
        <name>L-histidine</name>
        <dbReference type="ChEBI" id="CHEBI:57595"/>
    </ligand>
</feature>
<feature type="modified residue" description="Phosphoserine" evidence="7 9 10">
    <location>
        <position position="67"/>
    </location>
</feature>
<feature type="modified residue" description="N6-acetyllysine" evidence="8">
    <location>
        <position position="444"/>
    </location>
</feature>
<feature type="splice variant" id="VSP_055133" description="In isoform 2." evidence="5">
    <location>
        <begin position="37"/>
        <end position="61"/>
    </location>
</feature>
<feature type="sequence variant" id="VAR_083046" description="In PRLTS2; uncertain significance." evidence="4">
    <original>L</original>
    <variation>Q</variation>
    <location>
        <position position="46"/>
    </location>
</feature>
<feature type="sequence variant" id="VAR_083047" description="In PRLTS2; uncertain significance." evidence="4">
    <original>K</original>
    <variation>E</variation>
    <location>
        <position position="58"/>
    </location>
</feature>
<feature type="sequence variant" id="VAR_083048" description="In PRLTS2; uncertain significance." evidence="4">
    <original>R</original>
    <variation>K</variation>
    <location>
        <position position="87"/>
    </location>
</feature>
<feature type="sequence variant" id="VAR_083049" description="In PRLTS2; uncertain significance." evidence="4">
    <original>R</original>
    <variation>C</variation>
    <location>
        <position position="150"/>
    </location>
</feature>
<feature type="sequence variant" id="VAR_069532" description="In PRLTS2; the mutant protein is expressed, can dimerize and localizes to the mitochondria; has significantly decreased enzymatic activity compared to wild-type; dbSNP:rs397515410." evidence="3">
    <original>L</original>
    <variation>V</variation>
    <location>
        <position position="200"/>
    </location>
</feature>
<feature type="sequence variant" id="VAR_083050" description="In PRLTS2; uncertain significance." evidence="4">
    <original>R</original>
    <variation>Q</variation>
    <location>
        <position position="327"/>
    </location>
</feature>
<feature type="sequence variant" id="VAR_069533" description="In PRLTS2; the mutant protein is expressed, can dimerize and localizes to the mitochondria; has significantly decreased enzymatic activity compared to wild-type; dbSNP:rs376177973." evidence="3">
    <original>V</original>
    <variation>L</variation>
    <location>
        <position position="368"/>
    </location>
</feature>
<protein>
    <recommendedName>
        <fullName>Histidine--tRNA ligase, mitochondrial</fullName>
        <ecNumber evidence="3">6.1.1.21</ecNumber>
    </recommendedName>
    <alternativeName>
        <fullName>Histidine--tRNA ligase-like</fullName>
    </alternativeName>
    <alternativeName>
        <fullName>Histidyl-tRNA synthetase</fullName>
        <shortName>HisRS</shortName>
    </alternativeName>
</protein>
<sequence>MPLLGLLPRRAWASLLSQLLRPPCASCTGAVRCQSQVAEAVLTSQLKAHQEKPNFIIKTPKGTRDLSPQHMVVREKILDLVISCFKRHGAKGMDTPAFELKETLTEKYGEDSGLMYDLKDQGGELLSLRYDLTVPFARYLAMNKVKKMKRYHVGKVWRRESPTIVQGRYREFCQCDFDIAGQFDPMIPDAECLKIMCEILSGLQLGDFLIKVNDRRIVDGMFAVCGVPESKFRAICSSIDKLDKMAWKDVRHEMVVKKGLAPEVADRIGDYVQCHGGVSLVEQMFQDPRLSQNKQALEGLGDLKLLFEYLTLFGIADKISFDLSLARGLDYYTGVIYEAVLLQTPTQAGEEPLNVGSVAAGGRYDGLVGMFDPKGHKVPCVGLSIGVERIFYIVEQRMKTKGEKVRTTETQVFVATPQKNFLQERLKLIAELWDSGIKAEMLYKNNPKLLTQLHYCESTGIPLVVIIGEQELKEGVIKIRSVASREEVAIKRENFVAEIQKRLSES</sequence>
<comment type="function">
    <text evidence="3">Mitochondrial aminoacyl-tRNA synthetase that catalyzes the ATP-dependent ligation of histidine to the 3'-end of its cognate tRNA, via the formation of an aminoacyl-adenylate intermediate (His-AMP).</text>
</comment>
<comment type="catalytic activity">
    <reaction evidence="3">
        <text>tRNA(His) + L-histidine + ATP = L-histidyl-tRNA(His) + AMP + diphosphate + H(+)</text>
        <dbReference type="Rhea" id="RHEA:17313"/>
        <dbReference type="Rhea" id="RHEA-COMP:9665"/>
        <dbReference type="Rhea" id="RHEA-COMP:9689"/>
        <dbReference type="ChEBI" id="CHEBI:15378"/>
        <dbReference type="ChEBI" id="CHEBI:30616"/>
        <dbReference type="ChEBI" id="CHEBI:33019"/>
        <dbReference type="ChEBI" id="CHEBI:57595"/>
        <dbReference type="ChEBI" id="CHEBI:78442"/>
        <dbReference type="ChEBI" id="CHEBI:78527"/>
        <dbReference type="ChEBI" id="CHEBI:456215"/>
        <dbReference type="EC" id="6.1.1.21"/>
    </reaction>
</comment>
<comment type="subunit">
    <text evidence="3">Homodimer.</text>
</comment>
<comment type="interaction">
    <interactant intactId="EBI-3909030">
        <id>P49590</id>
    </interactant>
    <interactant intactId="EBI-741181">
        <id>Q6RW13</id>
        <label>AGTRAP</label>
    </interactant>
    <organismsDiffer>false</organismsDiffer>
    <experiments>3</experiments>
</comment>
<comment type="subcellular location">
    <subcellularLocation>
        <location evidence="3">Mitochondrion</location>
    </subcellularLocation>
</comment>
<comment type="alternative products">
    <event type="alternative splicing"/>
    <isoform>
        <id>P49590-1</id>
        <name>1</name>
        <sequence type="displayed"/>
    </isoform>
    <isoform>
        <id>P49590-2</id>
        <name>2</name>
        <sequence type="described" ref="VSP_055133"/>
    </isoform>
</comment>
<comment type="tissue specificity">
    <text>A high level expression is seen in the heart, kidney and skeletal muscle while a lower level expression is seen in the brain and liver.</text>
</comment>
<comment type="disease" evidence="3 4">
    <disease id="DI-03615">
        <name>Perrault syndrome 2</name>
        <acronym>PRLTS2</acronym>
        <description>An autosomal recessive, sex-influenced disorder characterized by sensorineural deafness in both males and females and ovarian dysgenesis in females. Affected females have primary amenorrhea, streak gonads, and infertility, whereas affected males show normal pubertal development and are fertile.</description>
        <dbReference type="MIM" id="614926"/>
    </disease>
    <text>The disease is caused by variants affecting the gene represented in this entry.</text>
</comment>
<comment type="similarity">
    <text evidence="6">Belongs to the class-II aminoacyl-tRNA synthetase family.</text>
</comment>
<keyword id="KW-0007">Acetylation</keyword>
<keyword id="KW-0025">Alternative splicing</keyword>
<keyword id="KW-0030">Aminoacyl-tRNA synthetase</keyword>
<keyword id="KW-0067">ATP-binding</keyword>
<keyword id="KW-0209">Deafness</keyword>
<keyword id="KW-0225">Disease variant</keyword>
<keyword id="KW-0436">Ligase</keyword>
<keyword id="KW-0496">Mitochondrion</keyword>
<keyword id="KW-0547">Nucleotide-binding</keyword>
<keyword id="KW-0597">Phosphoprotein</keyword>
<keyword id="KW-0648">Protein biosynthesis</keyword>
<keyword id="KW-1267">Proteomics identification</keyword>
<keyword id="KW-1185">Reference proteome</keyword>
<keyword id="KW-0809">Transit peptide</keyword>
<name>SYHM_HUMAN</name>
<dbReference type="EC" id="6.1.1.21" evidence="3"/>
<dbReference type="EMBL" id="U18936">
    <property type="protein sequence ID" value="AAA73972.1"/>
    <property type="molecule type" value="Genomic_DNA"/>
</dbReference>
<dbReference type="EMBL" id="U18937">
    <property type="protein sequence ID" value="AAA73974.1"/>
    <property type="molecule type" value="mRNA"/>
</dbReference>
<dbReference type="EMBL" id="AK293390">
    <property type="protein sequence ID" value="BAG56899.1"/>
    <property type="molecule type" value="mRNA"/>
</dbReference>
<dbReference type="EMBL" id="AC116353">
    <property type="status" value="NOT_ANNOTATED_CDS"/>
    <property type="molecule type" value="Genomic_DNA"/>
</dbReference>
<dbReference type="EMBL" id="CH471062">
    <property type="protein sequence ID" value="EAW62019.1"/>
    <property type="molecule type" value="Genomic_DNA"/>
</dbReference>
<dbReference type="EMBL" id="BC007680">
    <property type="protein sequence ID" value="AAH07680.1"/>
    <property type="molecule type" value="mRNA"/>
</dbReference>
<dbReference type="EMBL" id="BC014982">
    <property type="protein sequence ID" value="AAH14982.1"/>
    <property type="molecule type" value="mRNA"/>
</dbReference>
<dbReference type="CCDS" id="CCDS4238.1">
    <molecule id="P49590-1"/>
</dbReference>
<dbReference type="CCDS" id="CCDS64267.1">
    <molecule id="P49590-2"/>
</dbReference>
<dbReference type="PIR" id="I38913">
    <property type="entry name" value="I38913"/>
</dbReference>
<dbReference type="PIR" id="I38915">
    <property type="entry name" value="I38915"/>
</dbReference>
<dbReference type="RefSeq" id="NP_001265660.1">
    <molecule id="P49590-2"/>
    <property type="nucleotide sequence ID" value="NM_001278731.2"/>
</dbReference>
<dbReference type="RefSeq" id="NP_001265661.1">
    <property type="nucleotide sequence ID" value="NM_001278732.1"/>
</dbReference>
<dbReference type="RefSeq" id="NP_036340.1">
    <molecule id="P49590-1"/>
    <property type="nucleotide sequence ID" value="NM_012208.4"/>
</dbReference>
<dbReference type="SMR" id="P49590"/>
<dbReference type="BioGRID" id="117006">
    <property type="interactions" value="240"/>
</dbReference>
<dbReference type="DIP" id="DIP-59626N"/>
<dbReference type="FunCoup" id="P49590">
    <property type="interactions" value="4016"/>
</dbReference>
<dbReference type="IntAct" id="P49590">
    <property type="interactions" value="118"/>
</dbReference>
<dbReference type="MINT" id="P49590"/>
<dbReference type="STRING" id="9606.ENSP00000494965"/>
<dbReference type="iPTMnet" id="P49590"/>
<dbReference type="MetOSite" id="P49590"/>
<dbReference type="PhosphoSitePlus" id="P49590"/>
<dbReference type="SwissPalm" id="P49590"/>
<dbReference type="BioMuta" id="HARS2"/>
<dbReference type="jPOST" id="P49590"/>
<dbReference type="MassIVE" id="P49590"/>
<dbReference type="PaxDb" id="9606-ENSP00000230771"/>
<dbReference type="PeptideAtlas" id="P49590"/>
<dbReference type="ProteomicsDB" id="3907"/>
<dbReference type="ProteomicsDB" id="56026">
    <molecule id="P49590-1"/>
</dbReference>
<dbReference type="Pumba" id="P49590"/>
<dbReference type="Antibodypedia" id="27080">
    <property type="antibodies" value="218 antibodies from 23 providers"/>
</dbReference>
<dbReference type="DNASU" id="23438"/>
<dbReference type="Ensembl" id="ENST00000230771.9">
    <molecule id="P49590-1"/>
    <property type="protein sequence ID" value="ENSP00000230771.3"/>
    <property type="gene ID" value="ENSG00000112855.17"/>
</dbReference>
<dbReference type="Ensembl" id="ENST00000508522.5">
    <molecule id="P49590-2"/>
    <property type="protein sequence ID" value="ENSP00000423616.1"/>
    <property type="gene ID" value="ENSG00000112855.17"/>
</dbReference>
<dbReference type="Ensembl" id="ENST00000645749.1">
    <molecule id="P49590-1"/>
    <property type="protein sequence ID" value="ENSP00000494296.1"/>
    <property type="gene ID" value="ENSG00000112855.17"/>
</dbReference>
<dbReference type="GeneID" id="23438"/>
<dbReference type="KEGG" id="hsa:23438"/>
<dbReference type="MANE-Select" id="ENST00000230771.9">
    <property type="protein sequence ID" value="ENSP00000230771.3"/>
    <property type="RefSeq nucleotide sequence ID" value="NM_012208.4"/>
    <property type="RefSeq protein sequence ID" value="NP_036340.1"/>
</dbReference>
<dbReference type="UCSC" id="uc003lgx.5">
    <molecule id="P49590-1"/>
    <property type="organism name" value="human"/>
</dbReference>
<dbReference type="AGR" id="HGNC:4817"/>
<dbReference type="CTD" id="23438"/>
<dbReference type="DisGeNET" id="23438"/>
<dbReference type="GeneCards" id="HARS2"/>
<dbReference type="GeneReviews" id="HARS2"/>
<dbReference type="HGNC" id="HGNC:4817">
    <property type="gene designation" value="HARS2"/>
</dbReference>
<dbReference type="HPA" id="ENSG00000112855">
    <property type="expression patterns" value="Low tissue specificity"/>
</dbReference>
<dbReference type="MalaCards" id="HARS2"/>
<dbReference type="MIM" id="600783">
    <property type="type" value="gene"/>
</dbReference>
<dbReference type="MIM" id="614926">
    <property type="type" value="phenotype"/>
</dbReference>
<dbReference type="neXtProt" id="NX_P49590"/>
<dbReference type="OpenTargets" id="ENSG00000112855"/>
<dbReference type="Orphanet" id="642945">
    <property type="disease" value="Perrault syndrome type 1"/>
</dbReference>
<dbReference type="Orphanet" id="642976">
    <property type="disease" value="Perrault syndrome type 2"/>
</dbReference>
<dbReference type="PharmGKB" id="PA29192"/>
<dbReference type="VEuPathDB" id="HostDB:ENSG00000112855"/>
<dbReference type="eggNOG" id="KOG1936">
    <property type="taxonomic scope" value="Eukaryota"/>
</dbReference>
<dbReference type="GeneTree" id="ENSGT00390000005922"/>
<dbReference type="HOGENOM" id="CLU_025113_4_2_1"/>
<dbReference type="InParanoid" id="P49590"/>
<dbReference type="OMA" id="YQIQKVW"/>
<dbReference type="OrthoDB" id="1906957at2759"/>
<dbReference type="PAN-GO" id="P49590">
    <property type="GO annotations" value="5 GO annotations based on evolutionary models"/>
</dbReference>
<dbReference type="PhylomeDB" id="P49590"/>
<dbReference type="TreeFam" id="TF300652"/>
<dbReference type="BRENDA" id="6.1.1.21">
    <property type="organism ID" value="2681"/>
</dbReference>
<dbReference type="PathwayCommons" id="P49590"/>
<dbReference type="Reactome" id="R-HSA-379726">
    <property type="pathway name" value="Mitochondrial tRNA aminoacylation"/>
</dbReference>
<dbReference type="SignaLink" id="P49590"/>
<dbReference type="BioGRID-ORCS" id="23438">
    <property type="hits" value="384 hits in 1165 CRISPR screens"/>
</dbReference>
<dbReference type="CD-CODE" id="FB4E32DD">
    <property type="entry name" value="Presynaptic clusters and postsynaptic densities"/>
</dbReference>
<dbReference type="GeneWiki" id="HARS2"/>
<dbReference type="GenomeRNAi" id="23438"/>
<dbReference type="Pharos" id="P49590">
    <property type="development level" value="Tbio"/>
</dbReference>
<dbReference type="PRO" id="PR:P49590"/>
<dbReference type="Proteomes" id="UP000005640">
    <property type="component" value="Chromosome 5"/>
</dbReference>
<dbReference type="RNAct" id="P49590">
    <property type="molecule type" value="protein"/>
</dbReference>
<dbReference type="Bgee" id="ENSG00000112855">
    <property type="expression patterns" value="Expressed in cerebellar hemisphere and 188 other cell types or tissues"/>
</dbReference>
<dbReference type="ExpressionAtlas" id="P49590">
    <property type="expression patterns" value="baseline and differential"/>
</dbReference>
<dbReference type="GO" id="GO:0005829">
    <property type="term" value="C:cytosol"/>
    <property type="evidence" value="ECO:0000318"/>
    <property type="project" value="GO_Central"/>
</dbReference>
<dbReference type="GO" id="GO:0005759">
    <property type="term" value="C:mitochondrial matrix"/>
    <property type="evidence" value="ECO:0000304"/>
    <property type="project" value="Reactome"/>
</dbReference>
<dbReference type="GO" id="GO:0005739">
    <property type="term" value="C:mitochondrion"/>
    <property type="evidence" value="ECO:0000314"/>
    <property type="project" value="HPA"/>
</dbReference>
<dbReference type="GO" id="GO:0005524">
    <property type="term" value="F:ATP binding"/>
    <property type="evidence" value="ECO:0007669"/>
    <property type="project" value="UniProtKB-KW"/>
</dbReference>
<dbReference type="GO" id="GO:0004821">
    <property type="term" value="F:histidine-tRNA ligase activity"/>
    <property type="evidence" value="ECO:0000314"/>
    <property type="project" value="WormBase"/>
</dbReference>
<dbReference type="GO" id="GO:0042802">
    <property type="term" value="F:identical protein binding"/>
    <property type="evidence" value="ECO:0000353"/>
    <property type="project" value="WormBase"/>
</dbReference>
<dbReference type="GO" id="GO:0003723">
    <property type="term" value="F:RNA binding"/>
    <property type="evidence" value="ECO:0007005"/>
    <property type="project" value="UniProtKB"/>
</dbReference>
<dbReference type="GO" id="GO:0006427">
    <property type="term" value="P:histidyl-tRNA aminoacylation"/>
    <property type="evidence" value="ECO:0000314"/>
    <property type="project" value="WormBase"/>
</dbReference>
<dbReference type="GO" id="GO:0006412">
    <property type="term" value="P:translation"/>
    <property type="evidence" value="ECO:0000303"/>
    <property type="project" value="UniProtKB"/>
</dbReference>
<dbReference type="GO" id="GO:0006418">
    <property type="term" value="P:tRNA aminoacylation for protein translation"/>
    <property type="evidence" value="ECO:0000304"/>
    <property type="project" value="Reactome"/>
</dbReference>
<dbReference type="CDD" id="cd00773">
    <property type="entry name" value="HisRS-like_core"/>
    <property type="match status" value="1"/>
</dbReference>
<dbReference type="CDD" id="cd00859">
    <property type="entry name" value="HisRS_anticodon"/>
    <property type="match status" value="1"/>
</dbReference>
<dbReference type="FunFam" id="3.40.50.800:FF:000008">
    <property type="entry name" value="histidine--tRNA ligase, cytoplasmic isoform X1"/>
    <property type="match status" value="1"/>
</dbReference>
<dbReference type="FunFam" id="3.30.930.10:FF:000021">
    <property type="entry name" value="Probable histidine--tRNA ligase, mitochondrial"/>
    <property type="match status" value="1"/>
</dbReference>
<dbReference type="Gene3D" id="3.40.50.800">
    <property type="entry name" value="Anticodon-binding domain"/>
    <property type="match status" value="1"/>
</dbReference>
<dbReference type="Gene3D" id="3.30.930.10">
    <property type="entry name" value="Bira Bifunctional Protein, Domain 2"/>
    <property type="match status" value="1"/>
</dbReference>
<dbReference type="InterPro" id="IPR006195">
    <property type="entry name" value="aa-tRNA-synth_II"/>
</dbReference>
<dbReference type="InterPro" id="IPR045864">
    <property type="entry name" value="aa-tRNA-synth_II/BPL/LPL"/>
</dbReference>
<dbReference type="InterPro" id="IPR004154">
    <property type="entry name" value="Anticodon-bd"/>
</dbReference>
<dbReference type="InterPro" id="IPR036621">
    <property type="entry name" value="Anticodon-bd_dom_sf"/>
</dbReference>
<dbReference type="InterPro" id="IPR015807">
    <property type="entry name" value="His-tRNA-ligase"/>
</dbReference>
<dbReference type="InterPro" id="IPR041715">
    <property type="entry name" value="HisRS-like_core"/>
</dbReference>
<dbReference type="InterPro" id="IPR004516">
    <property type="entry name" value="HisRS/HisZ"/>
</dbReference>
<dbReference type="InterPro" id="IPR033656">
    <property type="entry name" value="HisRS_anticodon"/>
</dbReference>
<dbReference type="NCBIfam" id="TIGR00442">
    <property type="entry name" value="hisS"/>
    <property type="match status" value="1"/>
</dbReference>
<dbReference type="PANTHER" id="PTHR11476:SF6">
    <property type="entry name" value="HISTIDINE--TRNA LIGASE, MITOCHONDRIAL"/>
    <property type="match status" value="1"/>
</dbReference>
<dbReference type="PANTHER" id="PTHR11476">
    <property type="entry name" value="HISTIDYL-TRNA SYNTHETASE"/>
    <property type="match status" value="1"/>
</dbReference>
<dbReference type="Pfam" id="PF03129">
    <property type="entry name" value="HGTP_anticodon"/>
    <property type="match status" value="1"/>
</dbReference>
<dbReference type="Pfam" id="PF13393">
    <property type="entry name" value="tRNA-synt_His"/>
    <property type="match status" value="1"/>
</dbReference>
<dbReference type="PIRSF" id="PIRSF001549">
    <property type="entry name" value="His-tRNA_synth"/>
    <property type="match status" value="1"/>
</dbReference>
<dbReference type="SUPFAM" id="SSF52954">
    <property type="entry name" value="Class II aaRS ABD-related"/>
    <property type="match status" value="1"/>
</dbReference>
<dbReference type="SUPFAM" id="SSF55681">
    <property type="entry name" value="Class II aaRS and biotin synthetases"/>
    <property type="match status" value="1"/>
</dbReference>
<dbReference type="PROSITE" id="PS50862">
    <property type="entry name" value="AA_TRNA_LIGASE_II"/>
    <property type="match status" value="1"/>
</dbReference>
<organism>
    <name type="scientific">Homo sapiens</name>
    <name type="common">Human</name>
    <dbReference type="NCBI Taxonomy" id="9606"/>
    <lineage>
        <taxon>Eukaryota</taxon>
        <taxon>Metazoa</taxon>
        <taxon>Chordata</taxon>
        <taxon>Craniata</taxon>
        <taxon>Vertebrata</taxon>
        <taxon>Euteleostomi</taxon>
        <taxon>Mammalia</taxon>
        <taxon>Eutheria</taxon>
        <taxon>Euarchontoglires</taxon>
        <taxon>Primates</taxon>
        <taxon>Haplorrhini</taxon>
        <taxon>Catarrhini</taxon>
        <taxon>Hominidae</taxon>
        <taxon>Homo</taxon>
    </lineage>
</organism>
<evidence type="ECO:0000250" key="1">
    <source>
        <dbReference type="UniProtKB" id="P12081"/>
    </source>
</evidence>
<evidence type="ECO:0000255" key="2"/>
<evidence type="ECO:0000269" key="3">
    <source>
    </source>
</evidence>
<evidence type="ECO:0000269" key="4">
    <source>
    </source>
</evidence>
<evidence type="ECO:0000303" key="5">
    <source>
    </source>
</evidence>
<evidence type="ECO:0000305" key="6"/>
<evidence type="ECO:0007744" key="7">
    <source>
    </source>
</evidence>
<evidence type="ECO:0007744" key="8">
    <source>
    </source>
</evidence>
<evidence type="ECO:0007744" key="9">
    <source>
    </source>
</evidence>
<evidence type="ECO:0007744" key="10">
    <source>
    </source>
</evidence>
<accession>P49590</accession>
<accession>B4DDY8</accession>
<reference key="1">
    <citation type="journal article" date="1995" name="Biochem. Biophys. Res. Commun.">
        <title>A novel gene oriented in a head-to-head configuration with the human histidyl-tRNA synthetase (HRS) gene encodes an mRNA that predicts a polypeptide homologous to HRS.</title>
        <authorList>
            <person name="O'Hanlon T.P."/>
            <person name="Raben N."/>
            <person name="Miller F.W."/>
        </authorList>
    </citation>
    <scope>NUCLEOTIDE SEQUENCE [GENOMIC DNA / MRNA] (ISOFORM 1)</scope>
</reference>
<reference key="2">
    <citation type="journal article" date="2004" name="Nat. Genet.">
        <title>Complete sequencing and characterization of 21,243 full-length human cDNAs.</title>
        <authorList>
            <person name="Ota T."/>
            <person name="Suzuki Y."/>
            <person name="Nishikawa T."/>
            <person name="Otsuki T."/>
            <person name="Sugiyama T."/>
            <person name="Irie R."/>
            <person name="Wakamatsu A."/>
            <person name="Hayashi K."/>
            <person name="Sato H."/>
            <person name="Nagai K."/>
            <person name="Kimura K."/>
            <person name="Makita H."/>
            <person name="Sekine M."/>
            <person name="Obayashi M."/>
            <person name="Nishi T."/>
            <person name="Shibahara T."/>
            <person name="Tanaka T."/>
            <person name="Ishii S."/>
            <person name="Yamamoto J."/>
            <person name="Saito K."/>
            <person name="Kawai Y."/>
            <person name="Isono Y."/>
            <person name="Nakamura Y."/>
            <person name="Nagahari K."/>
            <person name="Murakami K."/>
            <person name="Yasuda T."/>
            <person name="Iwayanagi T."/>
            <person name="Wagatsuma M."/>
            <person name="Shiratori A."/>
            <person name="Sudo H."/>
            <person name="Hosoiri T."/>
            <person name="Kaku Y."/>
            <person name="Kodaira H."/>
            <person name="Kondo H."/>
            <person name="Sugawara M."/>
            <person name="Takahashi M."/>
            <person name="Kanda K."/>
            <person name="Yokoi T."/>
            <person name="Furuya T."/>
            <person name="Kikkawa E."/>
            <person name="Omura Y."/>
            <person name="Abe K."/>
            <person name="Kamihara K."/>
            <person name="Katsuta N."/>
            <person name="Sato K."/>
            <person name="Tanikawa M."/>
            <person name="Yamazaki M."/>
            <person name="Ninomiya K."/>
            <person name="Ishibashi T."/>
            <person name="Yamashita H."/>
            <person name="Murakawa K."/>
            <person name="Fujimori K."/>
            <person name="Tanai H."/>
            <person name="Kimata M."/>
            <person name="Watanabe M."/>
            <person name="Hiraoka S."/>
            <person name="Chiba Y."/>
            <person name="Ishida S."/>
            <person name="Ono Y."/>
            <person name="Takiguchi S."/>
            <person name="Watanabe S."/>
            <person name="Yosida M."/>
            <person name="Hotuta T."/>
            <person name="Kusano J."/>
            <person name="Kanehori K."/>
            <person name="Takahashi-Fujii A."/>
            <person name="Hara H."/>
            <person name="Tanase T.-O."/>
            <person name="Nomura Y."/>
            <person name="Togiya S."/>
            <person name="Komai F."/>
            <person name="Hara R."/>
            <person name="Takeuchi K."/>
            <person name="Arita M."/>
            <person name="Imose N."/>
            <person name="Musashino K."/>
            <person name="Yuuki H."/>
            <person name="Oshima A."/>
            <person name="Sasaki N."/>
            <person name="Aotsuka S."/>
            <person name="Yoshikawa Y."/>
            <person name="Matsunawa H."/>
            <person name="Ichihara T."/>
            <person name="Shiohata N."/>
            <person name="Sano S."/>
            <person name="Moriya S."/>
            <person name="Momiyama H."/>
            <person name="Satoh N."/>
            <person name="Takami S."/>
            <person name="Terashima Y."/>
            <person name="Suzuki O."/>
            <person name="Nakagawa S."/>
            <person name="Senoh A."/>
            <person name="Mizoguchi H."/>
            <person name="Goto Y."/>
            <person name="Shimizu F."/>
            <person name="Wakebe H."/>
            <person name="Hishigaki H."/>
            <person name="Watanabe T."/>
            <person name="Sugiyama A."/>
            <person name="Takemoto M."/>
            <person name="Kawakami B."/>
            <person name="Yamazaki M."/>
            <person name="Watanabe K."/>
            <person name="Kumagai A."/>
            <person name="Itakura S."/>
            <person name="Fukuzumi Y."/>
            <person name="Fujimori Y."/>
            <person name="Komiyama M."/>
            <person name="Tashiro H."/>
            <person name="Tanigami A."/>
            <person name="Fujiwara T."/>
            <person name="Ono T."/>
            <person name="Yamada K."/>
            <person name="Fujii Y."/>
            <person name="Ozaki K."/>
            <person name="Hirao M."/>
            <person name="Ohmori Y."/>
            <person name="Kawabata A."/>
            <person name="Hikiji T."/>
            <person name="Kobatake N."/>
            <person name="Inagaki H."/>
            <person name="Ikema Y."/>
            <person name="Okamoto S."/>
            <person name="Okitani R."/>
            <person name="Kawakami T."/>
            <person name="Noguchi S."/>
            <person name="Itoh T."/>
            <person name="Shigeta K."/>
            <person name="Senba T."/>
            <person name="Matsumura K."/>
            <person name="Nakajima Y."/>
            <person name="Mizuno T."/>
            <person name="Morinaga M."/>
            <person name="Sasaki M."/>
            <person name="Togashi T."/>
            <person name="Oyama M."/>
            <person name="Hata H."/>
            <person name="Watanabe M."/>
            <person name="Komatsu T."/>
            <person name="Mizushima-Sugano J."/>
            <person name="Satoh T."/>
            <person name="Shirai Y."/>
            <person name="Takahashi Y."/>
            <person name="Nakagawa K."/>
            <person name="Okumura K."/>
            <person name="Nagase T."/>
            <person name="Nomura N."/>
            <person name="Kikuchi H."/>
            <person name="Masuho Y."/>
            <person name="Yamashita R."/>
            <person name="Nakai K."/>
            <person name="Yada T."/>
            <person name="Nakamura Y."/>
            <person name="Ohara O."/>
            <person name="Isogai T."/>
            <person name="Sugano S."/>
        </authorList>
    </citation>
    <scope>NUCLEOTIDE SEQUENCE [LARGE SCALE MRNA] (ISOFORM 2)</scope>
    <source>
        <tissue>Urinary bladder</tissue>
    </source>
</reference>
<reference key="3">
    <citation type="journal article" date="2004" name="Nature">
        <title>The DNA sequence and comparative analysis of human chromosome 5.</title>
        <authorList>
            <person name="Schmutz J."/>
            <person name="Martin J."/>
            <person name="Terry A."/>
            <person name="Couronne O."/>
            <person name="Grimwood J."/>
            <person name="Lowry S."/>
            <person name="Gordon L.A."/>
            <person name="Scott D."/>
            <person name="Xie G."/>
            <person name="Huang W."/>
            <person name="Hellsten U."/>
            <person name="Tran-Gyamfi M."/>
            <person name="She X."/>
            <person name="Prabhakar S."/>
            <person name="Aerts A."/>
            <person name="Altherr M."/>
            <person name="Bajorek E."/>
            <person name="Black S."/>
            <person name="Branscomb E."/>
            <person name="Caoile C."/>
            <person name="Challacombe J.F."/>
            <person name="Chan Y.M."/>
            <person name="Denys M."/>
            <person name="Detter J.C."/>
            <person name="Escobar J."/>
            <person name="Flowers D."/>
            <person name="Fotopulos D."/>
            <person name="Glavina T."/>
            <person name="Gomez M."/>
            <person name="Gonzales E."/>
            <person name="Goodstein D."/>
            <person name="Grigoriev I."/>
            <person name="Groza M."/>
            <person name="Hammon N."/>
            <person name="Hawkins T."/>
            <person name="Haydu L."/>
            <person name="Israni S."/>
            <person name="Jett J."/>
            <person name="Kadner K."/>
            <person name="Kimball H."/>
            <person name="Kobayashi A."/>
            <person name="Lopez F."/>
            <person name="Lou Y."/>
            <person name="Martinez D."/>
            <person name="Medina C."/>
            <person name="Morgan J."/>
            <person name="Nandkeshwar R."/>
            <person name="Noonan J.P."/>
            <person name="Pitluck S."/>
            <person name="Pollard M."/>
            <person name="Predki P."/>
            <person name="Priest J."/>
            <person name="Ramirez L."/>
            <person name="Retterer J."/>
            <person name="Rodriguez A."/>
            <person name="Rogers S."/>
            <person name="Salamov A."/>
            <person name="Salazar A."/>
            <person name="Thayer N."/>
            <person name="Tice H."/>
            <person name="Tsai M."/>
            <person name="Ustaszewska A."/>
            <person name="Vo N."/>
            <person name="Wheeler J."/>
            <person name="Wu K."/>
            <person name="Yang J."/>
            <person name="Dickson M."/>
            <person name="Cheng J.-F."/>
            <person name="Eichler E.E."/>
            <person name="Olsen A."/>
            <person name="Pennacchio L.A."/>
            <person name="Rokhsar D.S."/>
            <person name="Richardson P."/>
            <person name="Lucas S.M."/>
            <person name="Myers R.M."/>
            <person name="Rubin E.M."/>
        </authorList>
    </citation>
    <scope>NUCLEOTIDE SEQUENCE [LARGE SCALE GENOMIC DNA]</scope>
</reference>
<reference key="4">
    <citation type="submission" date="2005-09" db="EMBL/GenBank/DDBJ databases">
        <authorList>
            <person name="Mural R.J."/>
            <person name="Istrail S."/>
            <person name="Sutton G."/>
            <person name="Florea L."/>
            <person name="Halpern A.L."/>
            <person name="Mobarry C.M."/>
            <person name="Lippert R."/>
            <person name="Walenz B."/>
            <person name="Shatkay H."/>
            <person name="Dew I."/>
            <person name="Miller J.R."/>
            <person name="Flanigan M.J."/>
            <person name="Edwards N.J."/>
            <person name="Bolanos R."/>
            <person name="Fasulo D."/>
            <person name="Halldorsson B.V."/>
            <person name="Hannenhalli S."/>
            <person name="Turner R."/>
            <person name="Yooseph S."/>
            <person name="Lu F."/>
            <person name="Nusskern D.R."/>
            <person name="Shue B.C."/>
            <person name="Zheng X.H."/>
            <person name="Zhong F."/>
            <person name="Delcher A.L."/>
            <person name="Huson D.H."/>
            <person name="Kravitz S.A."/>
            <person name="Mouchard L."/>
            <person name="Reinert K."/>
            <person name="Remington K.A."/>
            <person name="Clark A.G."/>
            <person name="Waterman M.S."/>
            <person name="Eichler E.E."/>
            <person name="Adams M.D."/>
            <person name="Hunkapiller M.W."/>
            <person name="Myers E.W."/>
            <person name="Venter J.C."/>
        </authorList>
    </citation>
    <scope>NUCLEOTIDE SEQUENCE [LARGE SCALE GENOMIC DNA]</scope>
</reference>
<reference key="5">
    <citation type="journal article" date="2004" name="Genome Res.">
        <title>The status, quality, and expansion of the NIH full-length cDNA project: the Mammalian Gene Collection (MGC).</title>
        <authorList>
            <consortium name="The MGC Project Team"/>
        </authorList>
    </citation>
    <scope>NUCLEOTIDE SEQUENCE [LARGE SCALE MRNA] (ISOFORM 1)</scope>
    <source>
        <tissue>Brain</tissue>
        <tissue>Skin</tissue>
    </source>
</reference>
<reference key="6">
    <citation type="journal article" date="2006" name="Cell">
        <title>Global, in vivo, and site-specific phosphorylation dynamics in signaling networks.</title>
        <authorList>
            <person name="Olsen J.V."/>
            <person name="Blagoev B."/>
            <person name="Gnad F."/>
            <person name="Macek B."/>
            <person name="Kumar C."/>
            <person name="Mortensen P."/>
            <person name="Mann M."/>
        </authorList>
    </citation>
    <scope>PHOSPHORYLATION [LARGE SCALE ANALYSIS] AT SER-67</scope>
    <scope>IDENTIFICATION BY MASS SPECTROMETRY [LARGE SCALE ANALYSIS]</scope>
    <source>
        <tissue>Cervix carcinoma</tissue>
    </source>
</reference>
<reference key="7">
    <citation type="journal article" date="2009" name="Science">
        <title>Lysine acetylation targets protein complexes and co-regulates major cellular functions.</title>
        <authorList>
            <person name="Choudhary C."/>
            <person name="Kumar C."/>
            <person name="Gnad F."/>
            <person name="Nielsen M.L."/>
            <person name="Rehman M."/>
            <person name="Walther T.C."/>
            <person name="Olsen J.V."/>
            <person name="Mann M."/>
        </authorList>
    </citation>
    <scope>ACETYLATION [LARGE SCALE ANALYSIS] AT LYS-444</scope>
    <scope>IDENTIFICATION BY MASS SPECTROMETRY [LARGE SCALE ANALYSIS]</scope>
</reference>
<reference key="8">
    <citation type="journal article" date="2011" name="BMC Syst. Biol.">
        <title>Initial characterization of the human central proteome.</title>
        <authorList>
            <person name="Burkard T.R."/>
            <person name="Planyavsky M."/>
            <person name="Kaupe I."/>
            <person name="Breitwieser F.P."/>
            <person name="Buerckstuemmer T."/>
            <person name="Bennett K.L."/>
            <person name="Superti-Furga G."/>
            <person name="Colinge J."/>
        </authorList>
    </citation>
    <scope>IDENTIFICATION BY MASS SPECTROMETRY [LARGE SCALE ANALYSIS]</scope>
</reference>
<reference key="9">
    <citation type="journal article" date="2011" name="Sci. Signal.">
        <title>System-wide temporal characterization of the proteome and phosphoproteome of human embryonic stem cell differentiation.</title>
        <authorList>
            <person name="Rigbolt K.T."/>
            <person name="Prokhorova T.A."/>
            <person name="Akimov V."/>
            <person name="Henningsen J."/>
            <person name="Johansen P.T."/>
            <person name="Kratchmarova I."/>
            <person name="Kassem M."/>
            <person name="Mann M."/>
            <person name="Olsen J.V."/>
            <person name="Blagoev B."/>
        </authorList>
    </citation>
    <scope>IDENTIFICATION BY MASS SPECTROMETRY [LARGE SCALE ANALYSIS]</scope>
</reference>
<reference key="10">
    <citation type="journal article" date="2013" name="J. Proteome Res.">
        <title>Toward a comprehensive characterization of a human cancer cell phosphoproteome.</title>
        <authorList>
            <person name="Zhou H."/>
            <person name="Di Palma S."/>
            <person name="Preisinger C."/>
            <person name="Peng M."/>
            <person name="Polat A.N."/>
            <person name="Heck A.J."/>
            <person name="Mohammed S."/>
        </authorList>
    </citation>
    <scope>PHOSPHORYLATION [LARGE SCALE ANALYSIS] AT SER-67</scope>
    <scope>IDENTIFICATION BY MASS SPECTROMETRY [LARGE SCALE ANALYSIS]</scope>
    <source>
        <tissue>Cervix carcinoma</tissue>
        <tissue>Erythroleukemia</tissue>
    </source>
</reference>
<reference key="11">
    <citation type="journal article" date="2014" name="J. Proteomics">
        <title>An enzyme assisted RP-RPLC approach for in-depth analysis of human liver phosphoproteome.</title>
        <authorList>
            <person name="Bian Y."/>
            <person name="Song C."/>
            <person name="Cheng K."/>
            <person name="Dong M."/>
            <person name="Wang F."/>
            <person name="Huang J."/>
            <person name="Sun D."/>
            <person name="Wang L."/>
            <person name="Ye M."/>
            <person name="Zou H."/>
        </authorList>
    </citation>
    <scope>PHOSPHORYLATION [LARGE SCALE ANALYSIS] AT SER-67</scope>
    <scope>IDENTIFICATION BY MASS SPECTROMETRY [LARGE SCALE ANALYSIS]</scope>
    <source>
        <tissue>Liver</tissue>
    </source>
</reference>
<reference key="12">
    <citation type="journal article" date="2015" name="Proteomics">
        <title>N-terminome analysis of the human mitochondrial proteome.</title>
        <authorList>
            <person name="Vaca Jacome A.S."/>
            <person name="Rabilloud T."/>
            <person name="Schaeffer-Reiss C."/>
            <person name="Rompais M."/>
            <person name="Ayoub D."/>
            <person name="Lane L."/>
            <person name="Bairoch A."/>
            <person name="Van Dorsselaer A."/>
            <person name="Carapito C."/>
        </authorList>
    </citation>
    <scope>IDENTIFICATION BY MASS SPECTROMETRY [LARGE SCALE ANALYSIS]</scope>
</reference>
<reference key="13">
    <citation type="journal article" date="2011" name="Proc. Natl. Acad. Sci. U.S.A.">
        <title>Mutations in mitochondrial histidyl tRNA synthetase HARS2 cause ovarian dysgenesis and sensorineural hearing loss of Perrault syndrome.</title>
        <authorList>
            <person name="Pierce S.B."/>
            <person name="Chisholm K.M."/>
            <person name="Lynch E.D."/>
            <person name="Lee M.K."/>
            <person name="Walsh T."/>
            <person name="Opitz J.M."/>
            <person name="Li W."/>
            <person name="Klevit R.E."/>
            <person name="King M.C."/>
        </authorList>
    </citation>
    <scope>VARIANTS PRLTS2 VAL-200 AND LEU-368</scope>
    <scope>CHARACTERIZATION OF VARIANTS PRLTS2 VAL-200 AND LEU-368</scope>
    <scope>SUBUNIT</scope>
    <scope>SUBCELLULAR LOCATION</scope>
    <scope>CATALYTIC ACTIVITY</scope>
    <scope>FUNCTION</scope>
</reference>
<reference key="14">
    <citation type="journal article" date="2019" name="Eur. J. Med. Genet.">
        <title>Novel HARS2 missense variants identified in individuals with sensorineural hearing impairment and Perrault syndrome.</title>
        <authorList>
            <person name="Karstensen H.G."/>
            <person name="Rendtorff N.D."/>
            <person name="Hindbaek L.S."/>
            <person name="Colombo R."/>
            <person name="Stein A."/>
            <person name="Birkebaek N.H."/>
            <person name="Hartmann-Petersen R."/>
            <person name="Lindorff-Larsen K."/>
            <person name="Hoejland A.T."/>
            <person name="Petersen M.B."/>
            <person name="Tranebjaerg L."/>
        </authorList>
    </citation>
    <scope>VARIANTS PRLTS2 GLN-46; GLU-58; LYS-87; CYS-150 AND GLN-327</scope>
</reference>